<feature type="initiator methionine" description="Removed" evidence="6">
    <location>
        <position position="1"/>
    </location>
</feature>
<feature type="chain" id="PRO_0000053353" description="Myoglobin">
    <location>
        <begin position="2"/>
        <end position="154"/>
    </location>
</feature>
<feature type="domain" description="Globin" evidence="5">
    <location>
        <begin position="2"/>
        <end position="148"/>
    </location>
</feature>
<feature type="binding site" evidence="4">
    <location>
        <position position="65"/>
    </location>
    <ligand>
        <name>nitrite</name>
        <dbReference type="ChEBI" id="CHEBI:16301"/>
    </ligand>
</feature>
<feature type="binding site" evidence="3 5">
    <location>
        <position position="65"/>
    </location>
    <ligand>
        <name>O2</name>
        <dbReference type="ChEBI" id="CHEBI:15379"/>
    </ligand>
</feature>
<feature type="binding site" description="proximal binding residue" evidence="1">
    <location>
        <position position="94"/>
    </location>
    <ligand>
        <name>heme b</name>
        <dbReference type="ChEBI" id="CHEBI:60344"/>
    </ligand>
    <ligandPart>
        <name>Fe</name>
        <dbReference type="ChEBI" id="CHEBI:18248"/>
    </ligandPart>
</feature>
<sequence>MGLSDQEWQQVLTIWGKVEADLAGHGHAVLMRLFQDHPETLDRFEKFKGLKTPDQMKGSEDLKKHGVTVLTQLGKILKQKGNHEAELKPLAQTHATKHKIPVKYLEFISEVIIKVIAEKHSADFGADSQAAMKKALELFRNDMASKYKEFGFQG</sequence>
<protein>
    <recommendedName>
        <fullName>Myoglobin</fullName>
    </recommendedName>
    <alternativeName>
        <fullName evidence="1">Nitrite reductase MB</fullName>
        <ecNumber evidence="1">1.7.-.-</ecNumber>
    </alternativeName>
    <alternativeName>
        <fullName evidence="1">Pseudoperoxidase MB</fullName>
        <ecNumber evidence="1">1.11.1.-</ecNumber>
    </alternativeName>
</protein>
<name>MYG_ANAPO</name>
<keyword id="KW-0963">Cytoplasm</keyword>
<keyword id="KW-0903">Direct protein sequencing</keyword>
<keyword id="KW-0349">Heme</keyword>
<keyword id="KW-0408">Iron</keyword>
<keyword id="KW-0479">Metal-binding</keyword>
<keyword id="KW-0514">Muscle protein</keyword>
<keyword id="KW-0560">Oxidoreductase</keyword>
<keyword id="KW-0561">Oxygen transport</keyword>
<keyword id="KW-0813">Transport</keyword>
<accession>Q7LZM2</accession>
<comment type="function">
    <text evidence="1">Monomeric heme protein which primary function is to store oxygen and facilitate its diffusion within muscle tissues. Reversibly binds oxygen through a pentacoordinated heme iron and enables its timely and efficient release as needed during periods of heightened demand. Depending on the oxidative conditions of tissues and cells, and in addition to its ability to bind oxygen, it also has a nitrite reductase activity whereby it regulates the production of bioactive nitric oxide. Under stress conditions, like hypoxia and anoxia, it also protects cells against reactive oxygen species thanks to its pseudoperoxidase activity.</text>
</comment>
<comment type="catalytic activity">
    <reaction evidence="1">
        <text>Fe(III)-heme b-[protein] + nitric oxide + H2O = Fe(II)-heme b-[protein] + nitrite + 2 H(+)</text>
        <dbReference type="Rhea" id="RHEA:77711"/>
        <dbReference type="Rhea" id="RHEA-COMP:18975"/>
        <dbReference type="Rhea" id="RHEA-COMP:18976"/>
        <dbReference type="ChEBI" id="CHEBI:15377"/>
        <dbReference type="ChEBI" id="CHEBI:15378"/>
        <dbReference type="ChEBI" id="CHEBI:16301"/>
        <dbReference type="ChEBI" id="CHEBI:16480"/>
        <dbReference type="ChEBI" id="CHEBI:55376"/>
        <dbReference type="ChEBI" id="CHEBI:60344"/>
    </reaction>
    <physiologicalReaction direction="right-to-left" evidence="1">
        <dbReference type="Rhea" id="RHEA:77713"/>
    </physiologicalReaction>
</comment>
<comment type="catalytic activity">
    <reaction evidence="1">
        <text>H2O2 + AH2 = A + 2 H2O</text>
        <dbReference type="Rhea" id="RHEA:30275"/>
        <dbReference type="ChEBI" id="CHEBI:13193"/>
        <dbReference type="ChEBI" id="CHEBI:15377"/>
        <dbReference type="ChEBI" id="CHEBI:16240"/>
        <dbReference type="ChEBI" id="CHEBI:17499"/>
    </reaction>
</comment>
<comment type="subunit">
    <text evidence="2">Monomeric.</text>
</comment>
<comment type="subcellular location">
    <subcellularLocation>
        <location evidence="1">Cytoplasm</location>
        <location evidence="1">Sarcoplasm</location>
    </subcellularLocation>
</comment>
<comment type="similarity">
    <text evidence="5">Belongs to the globin family.</text>
</comment>
<dbReference type="EC" id="1.7.-.-" evidence="1"/>
<dbReference type="EC" id="1.11.1.-" evidence="1"/>
<dbReference type="PIR" id="JC7790">
    <property type="entry name" value="JC7790"/>
</dbReference>
<dbReference type="SMR" id="Q7LZM2"/>
<dbReference type="GO" id="GO:0070062">
    <property type="term" value="C:extracellular exosome"/>
    <property type="evidence" value="ECO:0007669"/>
    <property type="project" value="TreeGrafter"/>
</dbReference>
<dbReference type="GO" id="GO:0016528">
    <property type="term" value="C:sarcoplasm"/>
    <property type="evidence" value="ECO:0000250"/>
    <property type="project" value="UniProtKB"/>
</dbReference>
<dbReference type="GO" id="GO:0020037">
    <property type="term" value="F:heme binding"/>
    <property type="evidence" value="ECO:0007669"/>
    <property type="project" value="InterPro"/>
</dbReference>
<dbReference type="GO" id="GO:0046872">
    <property type="term" value="F:metal ion binding"/>
    <property type="evidence" value="ECO:0007669"/>
    <property type="project" value="UniProtKB-KW"/>
</dbReference>
<dbReference type="GO" id="GO:0098809">
    <property type="term" value="F:nitrite reductase activity"/>
    <property type="evidence" value="ECO:0000250"/>
    <property type="project" value="UniProtKB"/>
</dbReference>
<dbReference type="GO" id="GO:0019825">
    <property type="term" value="F:oxygen binding"/>
    <property type="evidence" value="ECO:0007669"/>
    <property type="project" value="InterPro"/>
</dbReference>
<dbReference type="GO" id="GO:0005344">
    <property type="term" value="F:oxygen carrier activity"/>
    <property type="evidence" value="ECO:0000250"/>
    <property type="project" value="UniProtKB"/>
</dbReference>
<dbReference type="GO" id="GO:0004601">
    <property type="term" value="F:peroxidase activity"/>
    <property type="evidence" value="ECO:0000250"/>
    <property type="project" value="UniProtKB"/>
</dbReference>
<dbReference type="GO" id="GO:0019430">
    <property type="term" value="P:removal of superoxide radicals"/>
    <property type="evidence" value="ECO:0000250"/>
    <property type="project" value="UniProtKB"/>
</dbReference>
<dbReference type="Gene3D" id="6.10.140.2100">
    <property type="match status" value="1"/>
</dbReference>
<dbReference type="Gene3D" id="6.10.140.2110">
    <property type="match status" value="1"/>
</dbReference>
<dbReference type="InterPro" id="IPR000971">
    <property type="entry name" value="Globin"/>
</dbReference>
<dbReference type="InterPro" id="IPR009050">
    <property type="entry name" value="Globin-like_sf"/>
</dbReference>
<dbReference type="InterPro" id="IPR002335">
    <property type="entry name" value="Myoglobin"/>
</dbReference>
<dbReference type="PANTHER" id="PTHR47132">
    <property type="entry name" value="MYOGLOBIN"/>
    <property type="match status" value="1"/>
</dbReference>
<dbReference type="PANTHER" id="PTHR47132:SF1">
    <property type="entry name" value="MYOGLOBIN"/>
    <property type="match status" value="1"/>
</dbReference>
<dbReference type="Pfam" id="PF00042">
    <property type="entry name" value="Globin"/>
    <property type="match status" value="1"/>
</dbReference>
<dbReference type="PRINTS" id="PR00613">
    <property type="entry name" value="MYOGLOBIN"/>
</dbReference>
<dbReference type="SUPFAM" id="SSF46458">
    <property type="entry name" value="Globin-like"/>
    <property type="match status" value="1"/>
</dbReference>
<dbReference type="PROSITE" id="PS01033">
    <property type="entry name" value="GLOBIN"/>
    <property type="match status" value="1"/>
</dbReference>
<organism>
    <name type="scientific">Anas poecilorhyncha</name>
    <name type="common">Indian spot-billed duck</name>
    <dbReference type="NCBI Taxonomy" id="75854"/>
    <lineage>
        <taxon>Eukaryota</taxon>
        <taxon>Metazoa</taxon>
        <taxon>Chordata</taxon>
        <taxon>Craniata</taxon>
        <taxon>Vertebrata</taxon>
        <taxon>Euteleostomi</taxon>
        <taxon>Archelosauria</taxon>
        <taxon>Archosauria</taxon>
        <taxon>Dinosauria</taxon>
        <taxon>Saurischia</taxon>
        <taxon>Theropoda</taxon>
        <taxon>Coelurosauria</taxon>
        <taxon>Aves</taxon>
        <taxon>Neognathae</taxon>
        <taxon>Galloanserae</taxon>
        <taxon>Anseriformes</taxon>
        <taxon>Anatidae</taxon>
        <taxon>Anatinae</taxon>
        <taxon>Anas</taxon>
    </lineage>
</organism>
<reference key="1">
    <citation type="journal article" date="1998" name="Res. Commun. Biochem. Cell Mol. Biol.">
        <title>Molecular evolution of avian myoglobins from seven species in six different orders including three newly sequenced myoglobins from Japanese goshawk, spot-billed duck and thick-billed murre.</title>
        <authorList>
            <person name="Miyazaki K."/>
            <person name="Uchida T."/>
            <person name="Tsugita A."/>
        </authorList>
    </citation>
    <scope>PROTEIN SEQUENCE OF 2-154</scope>
</reference>
<evidence type="ECO:0000250" key="1">
    <source>
        <dbReference type="UniProtKB" id="P02144"/>
    </source>
</evidence>
<evidence type="ECO:0000250" key="2">
    <source>
        <dbReference type="UniProtKB" id="P02185"/>
    </source>
</evidence>
<evidence type="ECO:0000250" key="3">
    <source>
        <dbReference type="UniProtKB" id="P02189"/>
    </source>
</evidence>
<evidence type="ECO:0000250" key="4">
    <source>
        <dbReference type="UniProtKB" id="P68082"/>
    </source>
</evidence>
<evidence type="ECO:0000255" key="5">
    <source>
        <dbReference type="PROSITE-ProRule" id="PRU00238"/>
    </source>
</evidence>
<evidence type="ECO:0000269" key="6">
    <source ref="1"/>
</evidence>
<proteinExistence type="evidence at protein level"/>
<gene>
    <name type="primary">MB</name>
</gene>